<reference key="1">
    <citation type="journal article" date="2007" name="Nat. Biotechnol.">
        <title>Complete genome sequence of the erythromycin-producing bacterium Saccharopolyspora erythraea NRRL23338.</title>
        <authorList>
            <person name="Oliynyk M."/>
            <person name="Samborskyy M."/>
            <person name="Lester J.B."/>
            <person name="Mironenko T."/>
            <person name="Scott N."/>
            <person name="Dickens S."/>
            <person name="Haydock S.F."/>
            <person name="Leadlay P.F."/>
        </authorList>
    </citation>
    <scope>NUCLEOTIDE SEQUENCE [LARGE SCALE GENOMIC DNA]</scope>
    <source>
        <strain>ATCC 11635 / DSM 40517 / JCM 4748 / NBRC 13426 / NCIMB 8594 / NRRL 2338</strain>
    </source>
</reference>
<keyword id="KW-1185">Reference proteome</keyword>
<keyword id="KW-0687">Ribonucleoprotein</keyword>
<keyword id="KW-0689">Ribosomal protein</keyword>
<keyword id="KW-0694">RNA-binding</keyword>
<keyword id="KW-0699">rRNA-binding</keyword>
<comment type="function">
    <text evidence="1">This protein binds to the 23S rRNA, and is important in its secondary structure. It is located near the subunit interface in the base of the L7/L12 stalk, and near the tRNA binding site of the peptidyltransferase center.</text>
</comment>
<comment type="subunit">
    <text evidence="1">Part of the 50S ribosomal subunit.</text>
</comment>
<comment type="similarity">
    <text evidence="1">Belongs to the universal ribosomal protein uL6 family.</text>
</comment>
<accession>A4FPL0</accession>
<sequence length="179" mass="19477">MSRIGKLPITVPSGVEVTIDGQDVTVKGPKGSLVQRIAEPITVEKDDDGAILVKRPDDERNSRSLHGLSRSLVNNMVVGVSQGYQKDLEIHGVGYRVQQKGSNLEFALGYSHPVVVEPPEGIEFATDGPTKLSVKGIDKQLVGEIAARIRKLRRPDPYKGKGVRYAGENIRRKVGKTGK</sequence>
<evidence type="ECO:0000255" key="1">
    <source>
        <dbReference type="HAMAP-Rule" id="MF_01365"/>
    </source>
</evidence>
<evidence type="ECO:0000305" key="2"/>
<proteinExistence type="inferred from homology"/>
<feature type="chain" id="PRO_1000055301" description="Large ribosomal subunit protein uL6">
    <location>
        <begin position="1"/>
        <end position="179"/>
    </location>
</feature>
<protein>
    <recommendedName>
        <fullName evidence="1">Large ribosomal subunit protein uL6</fullName>
    </recommendedName>
    <alternativeName>
        <fullName evidence="2">50S ribosomal protein L6</fullName>
    </alternativeName>
</protein>
<gene>
    <name evidence="1" type="primary">rplF</name>
    <name type="ordered locus">SACE_6821</name>
</gene>
<name>RL6_SACEN</name>
<organism>
    <name type="scientific">Saccharopolyspora erythraea (strain ATCC 11635 / DSM 40517 / JCM 4748 / NBRC 13426 / NCIMB 8594 / NRRL 2338)</name>
    <dbReference type="NCBI Taxonomy" id="405948"/>
    <lineage>
        <taxon>Bacteria</taxon>
        <taxon>Bacillati</taxon>
        <taxon>Actinomycetota</taxon>
        <taxon>Actinomycetes</taxon>
        <taxon>Pseudonocardiales</taxon>
        <taxon>Pseudonocardiaceae</taxon>
        <taxon>Saccharopolyspora</taxon>
    </lineage>
</organism>
<dbReference type="EMBL" id="AM420293">
    <property type="protein sequence ID" value="CAM05985.1"/>
    <property type="molecule type" value="Genomic_DNA"/>
</dbReference>
<dbReference type="RefSeq" id="WP_009948648.1">
    <property type="nucleotide sequence ID" value="NC_009142.1"/>
</dbReference>
<dbReference type="SMR" id="A4FPL0"/>
<dbReference type="STRING" id="405948.SACE_6821"/>
<dbReference type="KEGG" id="sen:SACE_6821"/>
<dbReference type="eggNOG" id="COG0097">
    <property type="taxonomic scope" value="Bacteria"/>
</dbReference>
<dbReference type="HOGENOM" id="CLU_065464_1_2_11"/>
<dbReference type="OrthoDB" id="9805007at2"/>
<dbReference type="Proteomes" id="UP000006728">
    <property type="component" value="Chromosome"/>
</dbReference>
<dbReference type="GO" id="GO:0022625">
    <property type="term" value="C:cytosolic large ribosomal subunit"/>
    <property type="evidence" value="ECO:0007669"/>
    <property type="project" value="TreeGrafter"/>
</dbReference>
<dbReference type="GO" id="GO:0019843">
    <property type="term" value="F:rRNA binding"/>
    <property type="evidence" value="ECO:0007669"/>
    <property type="project" value="UniProtKB-UniRule"/>
</dbReference>
<dbReference type="GO" id="GO:0003735">
    <property type="term" value="F:structural constituent of ribosome"/>
    <property type="evidence" value="ECO:0007669"/>
    <property type="project" value="InterPro"/>
</dbReference>
<dbReference type="GO" id="GO:0002181">
    <property type="term" value="P:cytoplasmic translation"/>
    <property type="evidence" value="ECO:0007669"/>
    <property type="project" value="TreeGrafter"/>
</dbReference>
<dbReference type="FunFam" id="3.90.930.12:FF:000001">
    <property type="entry name" value="50S ribosomal protein L6"/>
    <property type="match status" value="1"/>
</dbReference>
<dbReference type="FunFam" id="3.90.930.12:FF:000002">
    <property type="entry name" value="50S ribosomal protein L6"/>
    <property type="match status" value="1"/>
</dbReference>
<dbReference type="Gene3D" id="3.90.930.12">
    <property type="entry name" value="Ribosomal protein L6, alpha-beta domain"/>
    <property type="match status" value="2"/>
</dbReference>
<dbReference type="HAMAP" id="MF_01365_B">
    <property type="entry name" value="Ribosomal_uL6_B"/>
    <property type="match status" value="1"/>
</dbReference>
<dbReference type="InterPro" id="IPR000702">
    <property type="entry name" value="Ribosomal_uL6-like"/>
</dbReference>
<dbReference type="InterPro" id="IPR036789">
    <property type="entry name" value="Ribosomal_uL6-like_a/b-dom_sf"/>
</dbReference>
<dbReference type="InterPro" id="IPR020040">
    <property type="entry name" value="Ribosomal_uL6_a/b-dom"/>
</dbReference>
<dbReference type="InterPro" id="IPR019906">
    <property type="entry name" value="Ribosomal_uL6_bac-type"/>
</dbReference>
<dbReference type="InterPro" id="IPR002358">
    <property type="entry name" value="Ribosomal_uL6_CS"/>
</dbReference>
<dbReference type="NCBIfam" id="TIGR03654">
    <property type="entry name" value="L6_bact"/>
    <property type="match status" value="1"/>
</dbReference>
<dbReference type="PANTHER" id="PTHR11655">
    <property type="entry name" value="60S/50S RIBOSOMAL PROTEIN L6/L9"/>
    <property type="match status" value="1"/>
</dbReference>
<dbReference type="PANTHER" id="PTHR11655:SF14">
    <property type="entry name" value="LARGE RIBOSOMAL SUBUNIT PROTEIN UL6M"/>
    <property type="match status" value="1"/>
</dbReference>
<dbReference type="Pfam" id="PF00347">
    <property type="entry name" value="Ribosomal_L6"/>
    <property type="match status" value="2"/>
</dbReference>
<dbReference type="PIRSF" id="PIRSF002162">
    <property type="entry name" value="Ribosomal_L6"/>
    <property type="match status" value="1"/>
</dbReference>
<dbReference type="PRINTS" id="PR00059">
    <property type="entry name" value="RIBOSOMALL6"/>
</dbReference>
<dbReference type="SUPFAM" id="SSF56053">
    <property type="entry name" value="Ribosomal protein L6"/>
    <property type="match status" value="2"/>
</dbReference>
<dbReference type="PROSITE" id="PS00525">
    <property type="entry name" value="RIBOSOMAL_L6_1"/>
    <property type="match status" value="1"/>
</dbReference>